<proteinExistence type="inferred from homology"/>
<evidence type="ECO:0000250" key="1"/>
<evidence type="ECO:0000305" key="2"/>
<name>RF2_RICPR</name>
<dbReference type="EMBL" id="AJ235271">
    <property type="protein sequence ID" value="CAA14736.1"/>
    <property type="molecule type" value="Genomic_DNA"/>
</dbReference>
<dbReference type="PIR" id="F71682">
    <property type="entry name" value="F71682"/>
</dbReference>
<dbReference type="RefSeq" id="NP_220659.2">
    <property type="nucleotide sequence ID" value="NC_000963.1"/>
</dbReference>
<dbReference type="SMR" id="Q9ZDQ2"/>
<dbReference type="STRING" id="272947.gene:17555355"/>
<dbReference type="EnsemblBacteria" id="CAA14736">
    <property type="protein sequence ID" value="CAA14736"/>
    <property type="gene ID" value="CAA14736"/>
</dbReference>
<dbReference type="KEGG" id="rpr:RP274"/>
<dbReference type="PATRIC" id="fig|272947.5.peg.281"/>
<dbReference type="eggNOG" id="COG1186">
    <property type="taxonomic scope" value="Bacteria"/>
</dbReference>
<dbReference type="HOGENOM" id="CLU_221951_1_0_5"/>
<dbReference type="OrthoDB" id="9806673at2"/>
<dbReference type="Proteomes" id="UP000002480">
    <property type="component" value="Chromosome"/>
</dbReference>
<dbReference type="GO" id="GO:0005737">
    <property type="term" value="C:cytoplasm"/>
    <property type="evidence" value="ECO:0007669"/>
    <property type="project" value="UniProtKB-SubCell"/>
</dbReference>
<dbReference type="GO" id="GO:0016149">
    <property type="term" value="F:translation release factor activity, codon specific"/>
    <property type="evidence" value="ECO:0007669"/>
    <property type="project" value="UniProtKB-UniRule"/>
</dbReference>
<dbReference type="FunFam" id="3.30.160.20:FF:000010">
    <property type="entry name" value="Peptide chain release factor 2"/>
    <property type="match status" value="1"/>
</dbReference>
<dbReference type="Gene3D" id="3.30.160.20">
    <property type="match status" value="1"/>
</dbReference>
<dbReference type="Gene3D" id="3.30.70.1660">
    <property type="match status" value="1"/>
</dbReference>
<dbReference type="Gene3D" id="1.20.58.410">
    <property type="entry name" value="Release factor"/>
    <property type="match status" value="1"/>
</dbReference>
<dbReference type="HAMAP" id="MF_00094">
    <property type="entry name" value="Rel_fac_2"/>
    <property type="match status" value="1"/>
</dbReference>
<dbReference type="InterPro" id="IPR005139">
    <property type="entry name" value="PCRF"/>
</dbReference>
<dbReference type="InterPro" id="IPR000352">
    <property type="entry name" value="Pep_chain_release_fac_I"/>
</dbReference>
<dbReference type="InterPro" id="IPR045853">
    <property type="entry name" value="Pep_chain_release_fac_I_sf"/>
</dbReference>
<dbReference type="InterPro" id="IPR004374">
    <property type="entry name" value="PrfB"/>
</dbReference>
<dbReference type="NCBIfam" id="TIGR00020">
    <property type="entry name" value="prfB"/>
    <property type="match status" value="1"/>
</dbReference>
<dbReference type="PANTHER" id="PTHR43116:SF3">
    <property type="entry name" value="CLASS I PEPTIDE CHAIN RELEASE FACTOR"/>
    <property type="match status" value="1"/>
</dbReference>
<dbReference type="PANTHER" id="PTHR43116">
    <property type="entry name" value="PEPTIDE CHAIN RELEASE FACTOR 2"/>
    <property type="match status" value="1"/>
</dbReference>
<dbReference type="Pfam" id="PF03462">
    <property type="entry name" value="PCRF"/>
    <property type="match status" value="1"/>
</dbReference>
<dbReference type="Pfam" id="PF00472">
    <property type="entry name" value="RF-1"/>
    <property type="match status" value="1"/>
</dbReference>
<dbReference type="SMART" id="SM00937">
    <property type="entry name" value="PCRF"/>
    <property type="match status" value="1"/>
</dbReference>
<dbReference type="SUPFAM" id="SSF75620">
    <property type="entry name" value="Release factor"/>
    <property type="match status" value="1"/>
</dbReference>
<dbReference type="PROSITE" id="PS00745">
    <property type="entry name" value="RF_PROK_I"/>
    <property type="match status" value="1"/>
</dbReference>
<gene>
    <name type="primary">prfB</name>
    <name type="ordered locus">RP274</name>
</gene>
<organism>
    <name type="scientific">Rickettsia prowazekii (strain Madrid E)</name>
    <dbReference type="NCBI Taxonomy" id="272947"/>
    <lineage>
        <taxon>Bacteria</taxon>
        <taxon>Pseudomonadati</taxon>
        <taxon>Pseudomonadota</taxon>
        <taxon>Alphaproteobacteria</taxon>
        <taxon>Rickettsiales</taxon>
        <taxon>Rickettsiaceae</taxon>
        <taxon>Rickettsieae</taxon>
        <taxon>Rickettsia</taxon>
        <taxon>typhus group</taxon>
    </lineage>
</organism>
<sequence length="369" mass="42095">MRAEIENYIKKIEQSLDLIWRSLDIEALTVRLTELEELTADPNLWNNNANAQTLLREKNNLEEKLNVFNKLKSNLKEILELEAMAEVENDLETLNQIEQDFKKLSIITAKFETECLFSGETDCNNCFLEINAGAGGTESHDWASIMMRMYLRFAERLGFKTKIINMINGEEVGIKSCTIRIIGKRAYGWFKTESGVHRLVRISPFNAAGKRMTSFASSWIYPEIDDDIAITIEDKDLRIDTFRSSGAGGQHVNTTDSAVRITHIPTNTVTQCQSDRSQHKNKAQAMKMLQAKLYKLEMQKRNENVDKQNANKTDNSWGHQIRSYVLQPYQIVKDLRTNYETSDTKGVLDGNLEDFVSASLSMNNSGNKT</sequence>
<protein>
    <recommendedName>
        <fullName>Peptide chain release factor 2</fullName>
        <shortName>RF-2</shortName>
    </recommendedName>
</protein>
<reference key="1">
    <citation type="journal article" date="1998" name="Nature">
        <title>The genome sequence of Rickettsia prowazekii and the origin of mitochondria.</title>
        <authorList>
            <person name="Andersson S.G.E."/>
            <person name="Zomorodipour A."/>
            <person name="Andersson J.O."/>
            <person name="Sicheritz-Ponten T."/>
            <person name="Alsmark U.C.M."/>
            <person name="Podowski R.M."/>
            <person name="Naeslund A.K."/>
            <person name="Eriksson A.-S."/>
            <person name="Winkler H.H."/>
            <person name="Kurland C.G."/>
        </authorList>
    </citation>
    <scope>NUCLEOTIDE SEQUENCE [LARGE SCALE GENOMIC DNA]</scope>
    <source>
        <strain>Madrid E</strain>
    </source>
</reference>
<accession>Q9ZDQ2</accession>
<keyword id="KW-0963">Cytoplasm</keyword>
<keyword id="KW-0488">Methylation</keyword>
<keyword id="KW-0648">Protein biosynthesis</keyword>
<keyword id="KW-1185">Reference proteome</keyword>
<feature type="chain" id="PRO_0000166840" description="Peptide chain release factor 2">
    <location>
        <begin position="1"/>
        <end position="369"/>
    </location>
</feature>
<feature type="modified residue" description="N5-methylglutamine" evidence="1">
    <location>
        <position position="250"/>
    </location>
</feature>
<comment type="function">
    <text evidence="1">Peptide chain release factor 2 directs the termination of translation in response to the peptide chain termination codons UGA and UAA.</text>
</comment>
<comment type="subcellular location">
    <subcellularLocation>
        <location evidence="1">Cytoplasm</location>
    </subcellularLocation>
</comment>
<comment type="PTM">
    <text evidence="1">Methylated by PrmC. Methylation increases the termination efficiency of RF2 (By similarity).</text>
</comment>
<comment type="similarity">
    <text evidence="2">Belongs to the prokaryotic/mitochondrial release factor family.</text>
</comment>